<feature type="chain" id="PRO_1000061512" description="Putative pre-16S rRNA nuclease">
    <location>
        <begin position="1"/>
        <end position="138"/>
    </location>
</feature>
<accession>A1AFD5</accession>
<keyword id="KW-0963">Cytoplasm</keyword>
<keyword id="KW-0378">Hydrolase</keyword>
<keyword id="KW-0540">Nuclease</keyword>
<keyword id="KW-1185">Reference proteome</keyword>
<keyword id="KW-0690">Ribosome biogenesis</keyword>
<evidence type="ECO:0000255" key="1">
    <source>
        <dbReference type="HAMAP-Rule" id="MF_00651"/>
    </source>
</evidence>
<name>YQGF_ECOK1</name>
<reference key="1">
    <citation type="journal article" date="2007" name="J. Bacteriol.">
        <title>The genome sequence of avian pathogenic Escherichia coli strain O1:K1:H7 shares strong similarities with human extraintestinal pathogenic E. coli genomes.</title>
        <authorList>
            <person name="Johnson T.J."/>
            <person name="Kariyawasam S."/>
            <person name="Wannemuehler Y."/>
            <person name="Mangiamele P."/>
            <person name="Johnson S.J."/>
            <person name="Doetkott C."/>
            <person name="Skyberg J.A."/>
            <person name="Lynne A.M."/>
            <person name="Johnson J.R."/>
            <person name="Nolan L.K."/>
        </authorList>
    </citation>
    <scope>NUCLEOTIDE SEQUENCE [LARGE SCALE GENOMIC DNA]</scope>
</reference>
<sequence length="138" mass="15186">MSGTLLAFDFGTKSIGVAVGQRITGTARPLPAIKAQDGTPDWNIIERLLKEWQPDEIIVGLPLNMDGTEQPLTARARKFANRIHGRFGVEVKLHDERLSTVEARSGLFEQGGYRALNKGKVDSASAVIILESYFEQGY</sequence>
<protein>
    <recommendedName>
        <fullName evidence="1">Putative pre-16S rRNA nuclease</fullName>
        <ecNumber evidence="1">3.1.-.-</ecNumber>
    </recommendedName>
</protein>
<gene>
    <name evidence="1" type="primary">yqgF</name>
    <name type="ordered locus">Ecok1_28810</name>
    <name type="ORF">APECO1_3572</name>
</gene>
<dbReference type="EC" id="3.1.-.-" evidence="1"/>
<dbReference type="EMBL" id="CP000468">
    <property type="protein sequence ID" value="ABJ02375.1"/>
    <property type="molecule type" value="Genomic_DNA"/>
</dbReference>
<dbReference type="BMRB" id="A1AFD5"/>
<dbReference type="SMR" id="A1AFD5"/>
<dbReference type="KEGG" id="ecv:APECO1_3572"/>
<dbReference type="HOGENOM" id="CLU_098240_3_0_6"/>
<dbReference type="Proteomes" id="UP000008216">
    <property type="component" value="Chromosome"/>
</dbReference>
<dbReference type="GO" id="GO:0005829">
    <property type="term" value="C:cytosol"/>
    <property type="evidence" value="ECO:0007669"/>
    <property type="project" value="TreeGrafter"/>
</dbReference>
<dbReference type="GO" id="GO:0004518">
    <property type="term" value="F:nuclease activity"/>
    <property type="evidence" value="ECO:0007669"/>
    <property type="project" value="UniProtKB-KW"/>
</dbReference>
<dbReference type="GO" id="GO:0000967">
    <property type="term" value="P:rRNA 5'-end processing"/>
    <property type="evidence" value="ECO:0007669"/>
    <property type="project" value="UniProtKB-UniRule"/>
</dbReference>
<dbReference type="CDD" id="cd16964">
    <property type="entry name" value="YqgF"/>
    <property type="match status" value="1"/>
</dbReference>
<dbReference type="FunFam" id="3.30.420.140:FF:000002">
    <property type="entry name" value="Putative pre-16S rRNA nuclease"/>
    <property type="match status" value="1"/>
</dbReference>
<dbReference type="Gene3D" id="3.30.420.140">
    <property type="entry name" value="YqgF/RNase H-like domain"/>
    <property type="match status" value="1"/>
</dbReference>
<dbReference type="HAMAP" id="MF_00651">
    <property type="entry name" value="Nuclease_YqgF"/>
    <property type="match status" value="1"/>
</dbReference>
<dbReference type="InterPro" id="IPR012337">
    <property type="entry name" value="RNaseH-like_sf"/>
</dbReference>
<dbReference type="InterPro" id="IPR005227">
    <property type="entry name" value="YqgF"/>
</dbReference>
<dbReference type="InterPro" id="IPR006641">
    <property type="entry name" value="YqgF/RNaseH-like_dom"/>
</dbReference>
<dbReference type="InterPro" id="IPR037027">
    <property type="entry name" value="YqgF/RNaseH-like_dom_sf"/>
</dbReference>
<dbReference type="NCBIfam" id="TIGR00250">
    <property type="entry name" value="RNAse_H_YqgF"/>
    <property type="match status" value="1"/>
</dbReference>
<dbReference type="PANTHER" id="PTHR33317">
    <property type="entry name" value="POLYNUCLEOTIDYL TRANSFERASE, RIBONUCLEASE H-LIKE SUPERFAMILY PROTEIN"/>
    <property type="match status" value="1"/>
</dbReference>
<dbReference type="PANTHER" id="PTHR33317:SF4">
    <property type="entry name" value="POLYNUCLEOTIDYL TRANSFERASE, RIBONUCLEASE H-LIKE SUPERFAMILY PROTEIN"/>
    <property type="match status" value="1"/>
</dbReference>
<dbReference type="Pfam" id="PF03652">
    <property type="entry name" value="RuvX"/>
    <property type="match status" value="1"/>
</dbReference>
<dbReference type="SMART" id="SM00732">
    <property type="entry name" value="YqgFc"/>
    <property type="match status" value="1"/>
</dbReference>
<dbReference type="SUPFAM" id="SSF53098">
    <property type="entry name" value="Ribonuclease H-like"/>
    <property type="match status" value="1"/>
</dbReference>
<organism>
    <name type="scientific">Escherichia coli O1:K1 / APEC</name>
    <dbReference type="NCBI Taxonomy" id="405955"/>
    <lineage>
        <taxon>Bacteria</taxon>
        <taxon>Pseudomonadati</taxon>
        <taxon>Pseudomonadota</taxon>
        <taxon>Gammaproteobacteria</taxon>
        <taxon>Enterobacterales</taxon>
        <taxon>Enterobacteriaceae</taxon>
        <taxon>Escherichia</taxon>
    </lineage>
</organism>
<comment type="function">
    <text evidence="1">Could be a nuclease involved in processing of the 5'-end of pre-16S rRNA.</text>
</comment>
<comment type="subcellular location">
    <subcellularLocation>
        <location evidence="1">Cytoplasm</location>
    </subcellularLocation>
</comment>
<comment type="similarity">
    <text evidence="1">Belongs to the YqgF nuclease family.</text>
</comment>
<proteinExistence type="inferred from homology"/>